<reference key="1">
    <citation type="submission" date="1998-08" db="EMBL/GenBank/DDBJ databases">
        <title>Isolation of novel genes from human colonic epithelial cells.</title>
        <authorList>
            <person name="Wang L."/>
            <person name="Kairo A."/>
            <person name="Gao Z.Q."/>
            <person name="Gao Z.P."/>
            <person name="Boman B.M."/>
        </authorList>
    </citation>
    <scope>NUCLEOTIDE SEQUENCE [MRNA]</scope>
    <source>
        <tissue>Colon</tissue>
    </source>
</reference>
<reference key="2">
    <citation type="submission" date="2000-06" db="EMBL/GenBank/DDBJ databases">
        <authorList>
            <person name="Yu L."/>
        </authorList>
    </citation>
    <scope>NUCLEOTIDE SEQUENCE [MRNA]</scope>
</reference>
<reference key="3">
    <citation type="journal article" date="2006" name="Nature">
        <title>The DNA sequence and biological annotation of human chromosome 1.</title>
        <authorList>
            <person name="Gregory S.G."/>
            <person name="Barlow K.F."/>
            <person name="McLay K.E."/>
            <person name="Kaul R."/>
            <person name="Swarbreck D."/>
            <person name="Dunham A."/>
            <person name="Scott C.E."/>
            <person name="Howe K.L."/>
            <person name="Woodfine K."/>
            <person name="Spencer C.C.A."/>
            <person name="Jones M.C."/>
            <person name="Gillson C."/>
            <person name="Searle S."/>
            <person name="Zhou Y."/>
            <person name="Kokocinski F."/>
            <person name="McDonald L."/>
            <person name="Evans R."/>
            <person name="Phillips K."/>
            <person name="Atkinson A."/>
            <person name="Cooper R."/>
            <person name="Jones C."/>
            <person name="Hall R.E."/>
            <person name="Andrews T.D."/>
            <person name="Lloyd C."/>
            <person name="Ainscough R."/>
            <person name="Almeida J.P."/>
            <person name="Ambrose K.D."/>
            <person name="Anderson F."/>
            <person name="Andrew R.W."/>
            <person name="Ashwell R.I.S."/>
            <person name="Aubin K."/>
            <person name="Babbage A.K."/>
            <person name="Bagguley C.L."/>
            <person name="Bailey J."/>
            <person name="Beasley H."/>
            <person name="Bethel G."/>
            <person name="Bird C.P."/>
            <person name="Bray-Allen S."/>
            <person name="Brown J.Y."/>
            <person name="Brown A.J."/>
            <person name="Buckley D."/>
            <person name="Burton J."/>
            <person name="Bye J."/>
            <person name="Carder C."/>
            <person name="Chapman J.C."/>
            <person name="Clark S.Y."/>
            <person name="Clarke G."/>
            <person name="Clee C."/>
            <person name="Cobley V."/>
            <person name="Collier R.E."/>
            <person name="Corby N."/>
            <person name="Coville G.J."/>
            <person name="Davies J."/>
            <person name="Deadman R."/>
            <person name="Dunn M."/>
            <person name="Earthrowl M."/>
            <person name="Ellington A.G."/>
            <person name="Errington H."/>
            <person name="Frankish A."/>
            <person name="Frankland J."/>
            <person name="French L."/>
            <person name="Garner P."/>
            <person name="Garnett J."/>
            <person name="Gay L."/>
            <person name="Ghori M.R.J."/>
            <person name="Gibson R."/>
            <person name="Gilby L.M."/>
            <person name="Gillett W."/>
            <person name="Glithero R.J."/>
            <person name="Grafham D.V."/>
            <person name="Griffiths C."/>
            <person name="Griffiths-Jones S."/>
            <person name="Grocock R."/>
            <person name="Hammond S."/>
            <person name="Harrison E.S.I."/>
            <person name="Hart E."/>
            <person name="Haugen E."/>
            <person name="Heath P.D."/>
            <person name="Holmes S."/>
            <person name="Holt K."/>
            <person name="Howden P.J."/>
            <person name="Hunt A.R."/>
            <person name="Hunt S.E."/>
            <person name="Hunter G."/>
            <person name="Isherwood J."/>
            <person name="James R."/>
            <person name="Johnson C."/>
            <person name="Johnson D."/>
            <person name="Joy A."/>
            <person name="Kay M."/>
            <person name="Kershaw J.K."/>
            <person name="Kibukawa M."/>
            <person name="Kimberley A.M."/>
            <person name="King A."/>
            <person name="Knights A.J."/>
            <person name="Lad H."/>
            <person name="Laird G."/>
            <person name="Lawlor S."/>
            <person name="Leongamornlert D.A."/>
            <person name="Lloyd D.M."/>
            <person name="Loveland J."/>
            <person name="Lovell J."/>
            <person name="Lush M.J."/>
            <person name="Lyne R."/>
            <person name="Martin S."/>
            <person name="Mashreghi-Mohammadi M."/>
            <person name="Matthews L."/>
            <person name="Matthews N.S.W."/>
            <person name="McLaren S."/>
            <person name="Milne S."/>
            <person name="Mistry S."/>
            <person name="Moore M.J.F."/>
            <person name="Nickerson T."/>
            <person name="O'Dell C.N."/>
            <person name="Oliver K."/>
            <person name="Palmeiri A."/>
            <person name="Palmer S.A."/>
            <person name="Parker A."/>
            <person name="Patel D."/>
            <person name="Pearce A.V."/>
            <person name="Peck A.I."/>
            <person name="Pelan S."/>
            <person name="Phelps K."/>
            <person name="Phillimore B.J."/>
            <person name="Plumb R."/>
            <person name="Rajan J."/>
            <person name="Raymond C."/>
            <person name="Rouse G."/>
            <person name="Saenphimmachak C."/>
            <person name="Sehra H.K."/>
            <person name="Sheridan E."/>
            <person name="Shownkeen R."/>
            <person name="Sims S."/>
            <person name="Skuce C.D."/>
            <person name="Smith M."/>
            <person name="Steward C."/>
            <person name="Subramanian S."/>
            <person name="Sycamore N."/>
            <person name="Tracey A."/>
            <person name="Tromans A."/>
            <person name="Van Helmond Z."/>
            <person name="Wall M."/>
            <person name="Wallis J.M."/>
            <person name="White S."/>
            <person name="Whitehead S.L."/>
            <person name="Wilkinson J.E."/>
            <person name="Willey D.L."/>
            <person name="Williams H."/>
            <person name="Wilming L."/>
            <person name="Wray P.W."/>
            <person name="Wu Z."/>
            <person name="Coulson A."/>
            <person name="Vaudin M."/>
            <person name="Sulston J.E."/>
            <person name="Durbin R.M."/>
            <person name="Hubbard T."/>
            <person name="Wooster R."/>
            <person name="Dunham I."/>
            <person name="Carter N.P."/>
            <person name="McVean G."/>
            <person name="Ross M.T."/>
            <person name="Harrow J."/>
            <person name="Olson M.V."/>
            <person name="Beck S."/>
            <person name="Rogers J."/>
            <person name="Bentley D.R."/>
        </authorList>
    </citation>
    <scope>NUCLEOTIDE SEQUENCE [LARGE SCALE GENOMIC DNA]</scope>
</reference>
<reference key="4">
    <citation type="submission" date="2005-09" db="EMBL/GenBank/DDBJ databases">
        <authorList>
            <person name="Mural R.J."/>
            <person name="Istrail S."/>
            <person name="Sutton G.G."/>
            <person name="Florea L."/>
            <person name="Halpern A.L."/>
            <person name="Mobarry C.M."/>
            <person name="Lippert R."/>
            <person name="Walenz B."/>
            <person name="Shatkay H."/>
            <person name="Dew I."/>
            <person name="Miller J.R."/>
            <person name="Flanigan M.J."/>
            <person name="Edwards N.J."/>
            <person name="Bolanos R."/>
            <person name="Fasulo D."/>
            <person name="Halldorsson B.V."/>
            <person name="Hannenhalli S."/>
            <person name="Turner R."/>
            <person name="Yooseph S."/>
            <person name="Lu F."/>
            <person name="Nusskern D.R."/>
            <person name="Shue B.C."/>
            <person name="Zheng X.H."/>
            <person name="Zhong F."/>
            <person name="Delcher A.L."/>
            <person name="Huson D.H."/>
            <person name="Kravitz S.A."/>
            <person name="Mouchard L."/>
            <person name="Reinert K."/>
            <person name="Remington K.A."/>
            <person name="Clark A.G."/>
            <person name="Waterman M.S."/>
            <person name="Eichler E.E."/>
            <person name="Adams M.D."/>
            <person name="Hunkapiller M.W."/>
            <person name="Myers E.W."/>
            <person name="Venter J.C."/>
        </authorList>
    </citation>
    <scope>NUCLEOTIDE SEQUENCE [LARGE SCALE GENOMIC DNA]</scope>
</reference>
<reference key="5">
    <citation type="journal article" date="2004" name="Genome Res.">
        <title>The status, quality, and expansion of the NIH full-length cDNA project: the Mammalian Gene Collection (MGC).</title>
        <authorList>
            <consortium name="The MGC Project Team"/>
        </authorList>
    </citation>
    <scope>NUCLEOTIDE SEQUENCE [LARGE SCALE MRNA]</scope>
    <source>
        <tissue>Ovary</tissue>
        <tissue>Pancreas</tissue>
        <tissue>Skin</tissue>
    </source>
</reference>
<reference key="6">
    <citation type="journal article" date="2001" name="J. Biol. Chem.">
        <title>Identification and characterization of a family of Rab11-interacting proteins.</title>
        <authorList>
            <person name="Hales C.M."/>
            <person name="Griner R."/>
            <person name="Hobdy-Henderson K.C."/>
            <person name="Dorn M.C."/>
            <person name="Hardy D."/>
            <person name="Kumar R."/>
            <person name="Navarre J."/>
            <person name="Chan E.K.L."/>
            <person name="Lapierre L.A."/>
            <person name="Goldenring J.R."/>
        </authorList>
    </citation>
    <scope>INTERACTION WITH RAB11FIP1; RAB11FIP2; RAB11FIP3 AND RAB11FIP4</scope>
</reference>
<reference key="7">
    <citation type="journal article" date="2004" name="Nat. Med.">
        <title>The RAB25 small GTPase determines aggressiveness of ovarian and breast cancers.</title>
        <authorList>
            <person name="Cheng K.W."/>
            <person name="Lahad J.P."/>
            <person name="Kuo W.L."/>
            <person name="Lapuk A."/>
            <person name="Yamada K."/>
            <person name="Auersperg N."/>
            <person name="Liu J."/>
            <person name="Smith-McCune K."/>
            <person name="Lu K.H."/>
            <person name="Fishman D."/>
            <person name="Gray J.W."/>
            <person name="Mills G.B."/>
        </authorList>
    </citation>
    <scope>FUNCTION</scope>
    <scope>TISSUE SPECIFICITY</scope>
</reference>
<reference key="8">
    <citation type="journal article" date="2007" name="Dev. Cell">
        <title>Rab25 associates with alpha5beta1 integrin to promote invasive migration in 3D microenvironments.</title>
        <authorList>
            <person name="Caswell P.T."/>
            <person name="Spence H.J."/>
            <person name="Parsons M."/>
            <person name="White D.P."/>
            <person name="Clark K."/>
            <person name="Cheng K.W."/>
            <person name="Mills G.B."/>
            <person name="Humphries M.J."/>
            <person name="Messent A.J."/>
            <person name="Anderson K.I."/>
            <person name="McCaffrey M.W."/>
            <person name="Ozanne B.W."/>
            <person name="Norman J.C."/>
        </authorList>
    </citation>
    <scope>FUNCTION</scope>
    <scope>INTERACTION WITH ITGAV AND ITGB1</scope>
</reference>
<reference key="9">
    <citation type="journal article" date="2011" name="BMC Syst. Biol.">
        <title>Initial characterization of the human central proteome.</title>
        <authorList>
            <person name="Burkard T.R."/>
            <person name="Planyavsky M."/>
            <person name="Kaupe I."/>
            <person name="Breitwieser F.P."/>
            <person name="Buerckstuemmer T."/>
            <person name="Bennett K.L."/>
            <person name="Superti-Furga G."/>
            <person name="Colinge J."/>
        </authorList>
    </citation>
    <scope>IDENTIFICATION BY MASS SPECTROMETRY [LARGE SCALE ANALYSIS]</scope>
</reference>
<reference key="10">
    <citation type="journal article" date="2015" name="J. Biol. Chem.">
        <title>Structure-Function Analyses of the Interactions between Rab11 and Rab14 Small GTPases with Their Shared Effector Rab Coupling Protein (RCP).</title>
        <authorList>
            <person name="Lall P."/>
            <person name="Lindsay A.J."/>
            <person name="Hanscom S."/>
            <person name="Kecman T."/>
            <person name="Taglauer E.S."/>
            <person name="McVeigh U.M."/>
            <person name="Franklin E."/>
            <person name="McCaffrey M.W."/>
            <person name="Khan A.R."/>
        </authorList>
    </citation>
    <scope>INTERACTION WITH RAB11FIP2</scope>
</reference>
<reference key="11">
    <citation type="journal article" date="2017" name="J. Invest. Dermatol.">
        <title>Autosomal Recessive Keratoderma-Ichthyosis-Deafness (ARKID) Syndrome Is Caused by VPS33B Mutations Affecting Rab Protein Interaction and Collagen Modification.</title>
        <authorList>
            <person name="Gruber R."/>
            <person name="Rogerson C."/>
            <person name="Windpassinger C."/>
            <person name="Banushi B."/>
            <person name="Straatman-Iwanowska A."/>
            <person name="Hanley J."/>
            <person name="Forneris F."/>
            <person name="Strohal R."/>
            <person name="Ulz P."/>
            <person name="Crumrine D."/>
            <person name="Menon G.K."/>
            <person name="Blunder S."/>
            <person name="Schmuth M."/>
            <person name="Mueller T."/>
            <person name="Smith H."/>
            <person name="Mills K."/>
            <person name="Kroisel P."/>
            <person name="Janecke A.R."/>
            <person name="Gissen P."/>
        </authorList>
    </citation>
    <scope>INTERACTION WITH VPS33B</scope>
</reference>
<reference evidence="17" key="12">
    <citation type="submission" date="2009-02" db="PDB data bank">
        <title>Crystal structure of human RAB25 in complex with GDP.</title>
        <authorList>
            <consortium name="Structural genomics consortium (SGC)"/>
        </authorList>
    </citation>
    <scope>X-RAY CRYSTALLOGRAPHY (2.3 ANGSTROMS) OF 7-180 IN COMPLEX WITH GDP AND MG(2+)</scope>
    <scope>COFACTOR</scope>
</reference>
<reference evidence="18" key="13">
    <citation type="submission" date="2011-09" db="PDB data bank">
        <title>Structure of the cancer associated Rab25 protein in complex with FIP2.</title>
        <authorList>
            <person name="Oda S."/>
            <person name="Lall P.Y."/>
            <person name="McCaffrey M.W."/>
            <person name="Khan A.R."/>
        </authorList>
    </citation>
    <scope>X-RAY CRYSTALLOGRAPHY (1.80 ANGSTROMS) OF 7-180 IN COMPLEX WITH MG(2+) AND GTP ANALOG</scope>
    <scope>COFACTOR</scope>
</reference>
<organism>
    <name type="scientific">Homo sapiens</name>
    <name type="common">Human</name>
    <dbReference type="NCBI Taxonomy" id="9606"/>
    <lineage>
        <taxon>Eukaryota</taxon>
        <taxon>Metazoa</taxon>
        <taxon>Chordata</taxon>
        <taxon>Craniata</taxon>
        <taxon>Vertebrata</taxon>
        <taxon>Euteleostomi</taxon>
        <taxon>Mammalia</taxon>
        <taxon>Eutheria</taxon>
        <taxon>Euarchontoglires</taxon>
        <taxon>Primates</taxon>
        <taxon>Haplorrhini</taxon>
        <taxon>Catarrhini</taxon>
        <taxon>Hominidae</taxon>
        <taxon>Homo</taxon>
    </lineage>
</organism>
<evidence type="ECO:0000250" key="1"/>
<evidence type="ECO:0000250" key="2">
    <source>
        <dbReference type="UniProtKB" id="E2RQ15"/>
    </source>
</evidence>
<evidence type="ECO:0000250" key="3">
    <source>
        <dbReference type="UniProtKB" id="P46629"/>
    </source>
</evidence>
<evidence type="ECO:0000250" key="4">
    <source>
        <dbReference type="UniProtKB" id="P61106"/>
    </source>
</evidence>
<evidence type="ECO:0000250" key="5">
    <source>
        <dbReference type="UniProtKB" id="P62820"/>
    </source>
</evidence>
<evidence type="ECO:0000250" key="6">
    <source>
        <dbReference type="UniProtKB" id="Q9WTL2"/>
    </source>
</evidence>
<evidence type="ECO:0000255" key="7"/>
<evidence type="ECO:0000269" key="8">
    <source>
    </source>
</evidence>
<evidence type="ECO:0000269" key="9">
    <source>
    </source>
</evidence>
<evidence type="ECO:0000269" key="10">
    <source>
    </source>
</evidence>
<evidence type="ECO:0000269" key="11">
    <source>
    </source>
</evidence>
<evidence type="ECO:0000269" key="12">
    <source>
    </source>
</evidence>
<evidence type="ECO:0000269" key="13">
    <source ref="12"/>
</evidence>
<evidence type="ECO:0000269" key="14">
    <source ref="13"/>
</evidence>
<evidence type="ECO:0000305" key="15"/>
<evidence type="ECO:0000312" key="16">
    <source>
        <dbReference type="HGNC" id="HGNC:18238"/>
    </source>
</evidence>
<evidence type="ECO:0007744" key="17">
    <source>
        <dbReference type="PDB" id="2OIL"/>
    </source>
</evidence>
<evidence type="ECO:0007744" key="18">
    <source>
        <dbReference type="PDB" id="3TSO"/>
    </source>
</evidence>
<evidence type="ECO:0007829" key="19">
    <source>
        <dbReference type="PDB" id="3TSO"/>
    </source>
</evidence>
<protein>
    <recommendedName>
        <fullName>Ras-related protein Rab-25</fullName>
        <ecNumber evidence="3">3.6.5.2</ecNumber>
    </recommendedName>
    <alternativeName>
        <fullName>CATX-8</fullName>
    </alternativeName>
</protein>
<comment type="function">
    <text evidence="2 3 4 6 10">The small GTPases Rab are key regulators of intracellular membrane trafficking, from the formation of transport vesicles to their fusion with membranes. Rabs cycle between an inactive GDP-bound form and an active GTP-bound form that is able to recruit to membranes different set of downstream effectors directly responsible for vesicle formation, movement, tethering and fusion (By similarity). RAB25 regulates epithelial cell differentiation, proliferation and survival, thereby playing key roles in tumorigenesis (PubMed:17925226). Promotes invasive migration of cells in which it functions to localize and maintain integrin alpha-V/beta-1 at the tips of extending pseudopodia (PubMed:17925226). Involved in the regulation of epithelial morphogenesis through the control of CLDN4 expression and localization at tight junctions (By similarity). May selectively regulate the apical recycling pathway (By similarity). Together with MYO5B regulates transcytosis (By similarity).</text>
</comment>
<comment type="catalytic activity">
    <reaction evidence="3">
        <text>GTP + H2O = GDP + phosphate + H(+)</text>
        <dbReference type="Rhea" id="RHEA:19669"/>
        <dbReference type="ChEBI" id="CHEBI:15377"/>
        <dbReference type="ChEBI" id="CHEBI:15378"/>
        <dbReference type="ChEBI" id="CHEBI:37565"/>
        <dbReference type="ChEBI" id="CHEBI:43474"/>
        <dbReference type="ChEBI" id="CHEBI:58189"/>
        <dbReference type="EC" id="3.6.5.2"/>
    </reaction>
    <physiologicalReaction direction="left-to-right" evidence="3">
        <dbReference type="Rhea" id="RHEA:19670"/>
    </physiologicalReaction>
</comment>
<comment type="cofactor">
    <cofactor evidence="13 14">
        <name>Mg(2+)</name>
        <dbReference type="ChEBI" id="CHEBI:18420"/>
    </cofactor>
</comment>
<comment type="activity regulation">
    <text evidence="15">Regulated by guanine nucleotide exchange factors (GEFs) which promote the exchange of bound GDP for free GTP (Probable). Regulated by GTPase activating proteins (GAPs) which increase the GTP hydrolysis activity (Probable). Inhibited by GDP dissociation inhibitors (GDIs) which prevent Rab-GDP dissociation (Probable).</text>
</comment>
<comment type="subunit">
    <text evidence="8 10 11 12">Interacts (GTP-bound form) with RAB11FIP1, RAB11FIP2, RAB11FIP3 and RAB11FIP4 (PubMed:11495908, PubMed:26032412). Interacts (via the hypervariable C-terminal region) with ITGB1 (via the cytoplasmic region); the interaction is GTP-dependent (PubMed:17925226). Interacts with ITGAV (PubMed:17925226). Associates with the integrin alpha-V/beta-1 heterodimer. Interacts with VPS33B (PubMed:28017832).</text>
</comment>
<comment type="interaction">
    <interactant intactId="EBI-1050500">
        <id>P57735</id>
    </interactant>
    <interactant intactId="EBI-14093244">
        <id>Q9ULV0-2</id>
        <label>MYO5B</label>
    </interactant>
    <organismsDiffer>false</organismsDiffer>
    <experiments>3</experiments>
</comment>
<comment type="interaction">
    <interactant intactId="EBI-1050500">
        <id>P57735</id>
    </interactant>
    <interactant intactId="EBI-1049676">
        <id>Q7L804</id>
        <label>RAB11FIP2</label>
    </interactant>
    <organismsDiffer>false</organismsDiffer>
    <experiments>5</experiments>
</comment>
<comment type="interaction">
    <interactant intactId="EBI-1050500">
        <id>P57735</id>
    </interactant>
    <interactant intactId="EBI-747389">
        <id>Q7L8J4</id>
        <label>SH3BP5L</label>
    </interactant>
    <organismsDiffer>false</organismsDiffer>
    <experiments>3</experiments>
</comment>
<comment type="interaction">
    <interactant intactId="EBI-1050500">
        <id>P57735</id>
    </interactant>
    <interactant intactId="EBI-11477912">
        <id>PRO_0000041303</id>
        <dbReference type="UniProtKB" id="P08563"/>
    </interactant>
    <organismsDiffer>true</organismsDiffer>
    <experiments>2</experiments>
</comment>
<comment type="subcellular location">
    <subcellularLocation>
        <location evidence="15">Cell membrane</location>
        <topology evidence="15">Lipid-anchor</topology>
        <orientation evidence="15">Cytoplasmic side</orientation>
    </subcellularLocation>
    <subcellularLocation>
        <location evidence="10">Cytoplasmic vesicle</location>
    </subcellularLocation>
    <subcellularLocation>
        <location evidence="10">Cell projection</location>
        <location evidence="10">Pseudopodium membrane</location>
    </subcellularLocation>
    <text evidence="3 10">Colocalizes with integrin alpha-V/beta-1 in vesicles at the pseudopodial tips. Colocalizes with RAB11A in subapical vesicles (By similarity).</text>
</comment>
<comment type="tissue specificity">
    <text evidence="9">Expression is restricted to epithelial cells (PubMed:15502842). Expressed in ovarian epithelium (NOE) and breast tissue. Expressed in ovarian cancer; expression is increased relative to NOE cells. Expression in ovarian cancer is stage dependent, with stage III and stage IV showing higher levels than early stage cancers. Expressed in breast cancer; expression is increased relative to normal breast tissue.</text>
</comment>
<comment type="domain">
    <text evidence="5">Switch 1, switch 2 and the interswitch regions are characteristic of Rab GTPases and mediate the interactions with Rab downstream effectors. The switch regions undergo conformational changes upon nucleotide binding which drive interaction with specific sets of effector proteins, with most effectors only binding to GTP-bound Rab.</text>
</comment>
<comment type="similarity">
    <text evidence="15">Belongs to the small GTPase superfamily. Rab family.</text>
</comment>
<comment type="sequence caution" evidence="15">
    <conflict type="frameshift">
        <sequence resource="EMBL-CDS" id="AAF98238"/>
    </conflict>
</comment>
<comment type="sequence caution" evidence="15">
    <conflict type="erroneous initiation">
        <sequence resource="EMBL-CDS" id="AAM69362"/>
    </conflict>
    <text>Extended N-terminus.</text>
</comment>
<accession>P57735</accession>
<accession>Q5VYA2</accession>
<accession>Q8NG24</accession>
<accession>Q96GB1</accession>
<accession>Q9BT12</accession>
<feature type="chain" id="PRO_0000121215" description="Ras-related protein Rab-25">
    <location>
        <begin position="1"/>
        <end position="210"/>
    </location>
</feature>
<feature type="propeptide" id="PRO_0000370821" description="Removed in mature form" evidence="7">
    <location>
        <begin position="211"/>
        <end position="213"/>
    </location>
</feature>
<feature type="short sequence motif" description="Switch 1" evidence="5">
    <location>
        <begin position="35"/>
        <end position="49"/>
    </location>
</feature>
<feature type="short sequence motif" description="Switch 2" evidence="5">
    <location>
        <begin position="67"/>
        <end position="84"/>
    </location>
</feature>
<feature type="binding site" evidence="18">
    <location>
        <position position="21"/>
    </location>
    <ligand>
        <name>GTP</name>
        <dbReference type="ChEBI" id="CHEBI:37565"/>
    </ligand>
</feature>
<feature type="binding site" evidence="18">
    <location>
        <position position="24"/>
    </location>
    <ligand>
        <name>GTP</name>
        <dbReference type="ChEBI" id="CHEBI:37565"/>
    </ligand>
</feature>
<feature type="binding site" evidence="18">
    <location>
        <position position="25"/>
    </location>
    <ligand>
        <name>GTP</name>
        <dbReference type="ChEBI" id="CHEBI:37565"/>
    </ligand>
</feature>
<feature type="binding site" evidence="18">
    <location>
        <position position="26"/>
    </location>
    <ligand>
        <name>GTP</name>
        <dbReference type="ChEBI" id="CHEBI:37565"/>
    </ligand>
</feature>
<feature type="binding site" evidence="17 18">
    <location>
        <position position="26"/>
    </location>
    <ligand>
        <name>Mg(2+)</name>
        <dbReference type="ChEBI" id="CHEBI:18420"/>
    </ligand>
</feature>
<feature type="binding site" evidence="18">
    <location>
        <position position="27"/>
    </location>
    <ligand>
        <name>GTP</name>
        <dbReference type="ChEBI" id="CHEBI:37565"/>
    </ligand>
</feature>
<feature type="binding site" evidence="18">
    <location>
        <position position="38"/>
    </location>
    <ligand>
        <name>GTP</name>
        <dbReference type="ChEBI" id="CHEBI:37565"/>
    </ligand>
</feature>
<feature type="binding site" evidence="18">
    <location>
        <position position="39"/>
    </location>
    <ligand>
        <name>GTP</name>
        <dbReference type="ChEBI" id="CHEBI:37565"/>
    </ligand>
</feature>
<feature type="binding site" evidence="18">
    <location>
        <position position="43"/>
    </location>
    <ligand>
        <name>GTP</name>
        <dbReference type="ChEBI" id="CHEBI:37565"/>
    </ligand>
</feature>
<feature type="binding site" evidence="18">
    <location>
        <position position="44"/>
    </location>
    <ligand>
        <name>GTP</name>
        <dbReference type="ChEBI" id="CHEBI:37565"/>
    </ligand>
</feature>
<feature type="binding site" evidence="18">
    <location>
        <position position="44"/>
    </location>
    <ligand>
        <name>Mg(2+)</name>
        <dbReference type="ChEBI" id="CHEBI:18420"/>
    </ligand>
</feature>
<feature type="binding site" evidence="18">
    <location>
        <position position="67"/>
    </location>
    <ligand>
        <name>Mg(2+)</name>
        <dbReference type="ChEBI" id="CHEBI:18420"/>
    </ligand>
</feature>
<feature type="binding site" evidence="18">
    <location>
        <position position="70"/>
    </location>
    <ligand>
        <name>GTP</name>
        <dbReference type="ChEBI" id="CHEBI:37565"/>
    </ligand>
</feature>
<feature type="binding site" evidence="18">
    <location>
        <position position="125"/>
    </location>
    <ligand>
        <name>GTP</name>
        <dbReference type="ChEBI" id="CHEBI:37565"/>
    </ligand>
</feature>
<feature type="binding site" evidence="18">
    <location>
        <position position="126"/>
    </location>
    <ligand>
        <name>GTP</name>
        <dbReference type="ChEBI" id="CHEBI:37565"/>
    </ligand>
</feature>
<feature type="binding site" evidence="18">
    <location>
        <position position="128"/>
    </location>
    <ligand>
        <name>GTP</name>
        <dbReference type="ChEBI" id="CHEBI:37565"/>
    </ligand>
</feature>
<feature type="binding site" evidence="18">
    <location>
        <position position="156"/>
    </location>
    <ligand>
        <name>GTP</name>
        <dbReference type="ChEBI" id="CHEBI:37565"/>
    </ligand>
</feature>
<feature type="binding site" evidence="18">
    <location>
        <position position="157"/>
    </location>
    <ligand>
        <name>GTP</name>
        <dbReference type="ChEBI" id="CHEBI:37565"/>
    </ligand>
</feature>
<feature type="modified residue" description="Cysteine methyl ester" evidence="7">
    <location>
        <position position="210"/>
    </location>
</feature>
<feature type="lipid moiety-binding region" description="S-geranylgeranyl cysteine" evidence="1">
    <location>
        <position position="209"/>
    </location>
</feature>
<feature type="lipid moiety-binding region" description="S-geranylgeranyl cysteine" evidence="1">
    <location>
        <position position="210"/>
    </location>
</feature>
<feature type="sequence conflict" description="In Ref. 1; AAF98238." evidence="15" ref="1">
    <original>P</original>
    <variation>L</variation>
    <location>
        <position position="203"/>
    </location>
</feature>
<feature type="strand" evidence="19">
    <location>
        <begin position="11"/>
        <end position="19"/>
    </location>
</feature>
<feature type="helix" evidence="19">
    <location>
        <begin position="25"/>
        <end position="34"/>
    </location>
</feature>
<feature type="strand" evidence="19">
    <location>
        <begin position="46"/>
        <end position="56"/>
    </location>
</feature>
<feature type="strand" evidence="19">
    <location>
        <begin position="59"/>
        <end position="68"/>
    </location>
</feature>
<feature type="helix" evidence="19">
    <location>
        <begin position="78"/>
        <end position="82"/>
    </location>
</feature>
<feature type="strand" evidence="19">
    <location>
        <begin position="87"/>
        <end position="93"/>
    </location>
</feature>
<feature type="helix" evidence="19">
    <location>
        <begin position="97"/>
        <end position="101"/>
    </location>
</feature>
<feature type="helix" evidence="19">
    <location>
        <begin position="103"/>
        <end position="111"/>
    </location>
</feature>
<feature type="strand" evidence="19">
    <location>
        <begin position="119"/>
        <end position="125"/>
    </location>
</feature>
<feature type="helix" evidence="19">
    <location>
        <begin position="127"/>
        <end position="132"/>
    </location>
</feature>
<feature type="helix" evidence="19">
    <location>
        <begin position="137"/>
        <end position="146"/>
    </location>
</feature>
<feature type="strand" evidence="19">
    <location>
        <begin position="150"/>
        <end position="153"/>
    </location>
</feature>
<feature type="turn" evidence="19">
    <location>
        <begin position="156"/>
        <end position="158"/>
    </location>
</feature>
<feature type="helix" evidence="19">
    <location>
        <begin position="162"/>
        <end position="177"/>
    </location>
</feature>
<gene>
    <name evidence="16" type="primary">RAB25</name>
    <name type="synonym">CATX8</name>
</gene>
<keyword id="KW-0002">3D-structure</keyword>
<keyword id="KW-1003">Cell membrane</keyword>
<keyword id="KW-0966">Cell projection</keyword>
<keyword id="KW-0968">Cytoplasmic vesicle</keyword>
<keyword id="KW-0342">GTP-binding</keyword>
<keyword id="KW-0378">Hydrolase</keyword>
<keyword id="KW-0449">Lipoprotein</keyword>
<keyword id="KW-0472">Membrane</keyword>
<keyword id="KW-0488">Methylation</keyword>
<keyword id="KW-0547">Nucleotide-binding</keyword>
<keyword id="KW-0636">Prenylation</keyword>
<keyword id="KW-0653">Protein transport</keyword>
<keyword id="KW-1267">Proteomics identification</keyword>
<keyword id="KW-1185">Reference proteome</keyword>
<keyword id="KW-0813">Transport</keyword>
<sequence length="213" mass="23496">MGNGTEEDYNFVFKVVLIGESGVGKTNLLSRFTRNEFSHDSRTTIGVEFSTRTVMLGTAAVKAQIWDTAGLERYRAITSAYYRGAVGALLVFDLTKHQTYAVVERWLKELYDHAEATIVVMLVGNKSDLSQAREVPTEEARMFAENNGLLFLETSALDSTNVELAFETVLKEIFAKVSKQRQNSIRTNAITLGSAQAGQEPGPGEKRACCISL</sequence>
<name>RAB25_HUMAN</name>
<proteinExistence type="evidence at protein level"/>
<dbReference type="EC" id="3.6.5.2" evidence="3"/>
<dbReference type="EMBL" id="AF083124">
    <property type="protein sequence ID" value="AAF98238.1"/>
    <property type="status" value="ALT_FRAME"/>
    <property type="molecule type" value="mRNA"/>
</dbReference>
<dbReference type="EMBL" id="AF274025">
    <property type="protein sequence ID" value="AAM69362.1"/>
    <property type="status" value="ALT_INIT"/>
    <property type="molecule type" value="mRNA"/>
</dbReference>
<dbReference type="EMBL" id="AL355388">
    <property type="status" value="NOT_ANNOTATED_CDS"/>
    <property type="molecule type" value="Genomic_DNA"/>
</dbReference>
<dbReference type="EMBL" id="CH471121">
    <property type="protein sequence ID" value="EAW53003.1"/>
    <property type="molecule type" value="Genomic_DNA"/>
</dbReference>
<dbReference type="EMBL" id="BC004416">
    <property type="protein sequence ID" value="AAH04416.1"/>
    <property type="molecule type" value="mRNA"/>
</dbReference>
<dbReference type="EMBL" id="BC009831">
    <property type="protein sequence ID" value="AAH09831.1"/>
    <property type="molecule type" value="mRNA"/>
</dbReference>
<dbReference type="EMBL" id="BC033322">
    <property type="protein sequence ID" value="AAH33322.1"/>
    <property type="molecule type" value="mRNA"/>
</dbReference>
<dbReference type="CCDS" id="CCDS41413.1"/>
<dbReference type="RefSeq" id="NP_065120.2">
    <property type="nucleotide sequence ID" value="NM_020387.4"/>
</dbReference>
<dbReference type="PDB" id="2OIL">
    <property type="method" value="X-ray"/>
    <property type="resolution" value="2.30 A"/>
    <property type="chains" value="A=7-180"/>
</dbReference>
<dbReference type="PDB" id="3TSO">
    <property type="method" value="X-ray"/>
    <property type="resolution" value="1.80 A"/>
    <property type="chains" value="A/B=7-180"/>
</dbReference>
<dbReference type="PDBsum" id="2OIL"/>
<dbReference type="PDBsum" id="3TSO"/>
<dbReference type="SMR" id="P57735"/>
<dbReference type="BioGRID" id="121377">
    <property type="interactions" value="293"/>
</dbReference>
<dbReference type="FunCoup" id="P57735">
    <property type="interactions" value="446"/>
</dbReference>
<dbReference type="IntAct" id="P57735">
    <property type="interactions" value="20"/>
</dbReference>
<dbReference type="MINT" id="P57735"/>
<dbReference type="STRING" id="9606.ENSP00000354376"/>
<dbReference type="iPTMnet" id="P57735"/>
<dbReference type="PhosphoSitePlus" id="P57735"/>
<dbReference type="SwissPalm" id="P57735"/>
<dbReference type="BioMuta" id="RAB25"/>
<dbReference type="DMDM" id="46577696"/>
<dbReference type="jPOST" id="P57735"/>
<dbReference type="MassIVE" id="P57735"/>
<dbReference type="PaxDb" id="9606-ENSP00000354376"/>
<dbReference type="PeptideAtlas" id="P57735"/>
<dbReference type="ProteomicsDB" id="57023"/>
<dbReference type="Pumba" id="P57735"/>
<dbReference type="Antibodypedia" id="1660">
    <property type="antibodies" value="295 antibodies from 30 providers"/>
</dbReference>
<dbReference type="DNASU" id="57111"/>
<dbReference type="Ensembl" id="ENST00000361084.10">
    <property type="protein sequence ID" value="ENSP00000354376.5"/>
    <property type="gene ID" value="ENSG00000132698.15"/>
</dbReference>
<dbReference type="GeneID" id="57111"/>
<dbReference type="KEGG" id="hsa:57111"/>
<dbReference type="MANE-Select" id="ENST00000361084.10">
    <property type="protein sequence ID" value="ENSP00000354376.5"/>
    <property type="RefSeq nucleotide sequence ID" value="NM_020387.4"/>
    <property type="RefSeq protein sequence ID" value="NP_065120.2"/>
</dbReference>
<dbReference type="UCSC" id="uc001fnc.4">
    <property type="organism name" value="human"/>
</dbReference>
<dbReference type="AGR" id="HGNC:18238"/>
<dbReference type="CTD" id="57111"/>
<dbReference type="DisGeNET" id="57111"/>
<dbReference type="GeneCards" id="RAB25"/>
<dbReference type="HGNC" id="HGNC:18238">
    <property type="gene designation" value="RAB25"/>
</dbReference>
<dbReference type="HPA" id="ENSG00000132698">
    <property type="expression patterns" value="Tissue enhanced (esophagus, skin)"/>
</dbReference>
<dbReference type="MIM" id="612942">
    <property type="type" value="gene"/>
</dbReference>
<dbReference type="neXtProt" id="NX_P57735"/>
<dbReference type="OpenTargets" id="ENSG00000132698"/>
<dbReference type="PharmGKB" id="PA34115"/>
<dbReference type="VEuPathDB" id="HostDB:ENSG00000132698"/>
<dbReference type="eggNOG" id="KOG0087">
    <property type="taxonomic scope" value="Eukaryota"/>
</dbReference>
<dbReference type="GeneTree" id="ENSGT00940000158230"/>
<dbReference type="HOGENOM" id="CLU_041217_23_0_1"/>
<dbReference type="InParanoid" id="P57735"/>
<dbReference type="OMA" id="KRACCIN"/>
<dbReference type="OrthoDB" id="9989112at2759"/>
<dbReference type="PAN-GO" id="P57735">
    <property type="GO annotations" value="5 GO annotations based on evolutionary models"/>
</dbReference>
<dbReference type="PhylomeDB" id="P57735"/>
<dbReference type="TreeFam" id="TF300099"/>
<dbReference type="PathwayCommons" id="P57735"/>
<dbReference type="Reactome" id="R-HSA-8873719">
    <property type="pathway name" value="RAB geranylgeranylation"/>
</dbReference>
<dbReference type="SignaLink" id="P57735"/>
<dbReference type="BioGRID-ORCS" id="57111">
    <property type="hits" value="23 hits in 1144 CRISPR screens"/>
</dbReference>
<dbReference type="ChiTaRS" id="RAB25">
    <property type="organism name" value="human"/>
</dbReference>
<dbReference type="EvolutionaryTrace" id="P57735"/>
<dbReference type="GeneWiki" id="RAB25"/>
<dbReference type="GenomeRNAi" id="57111"/>
<dbReference type="Pharos" id="P57735">
    <property type="development level" value="Tbio"/>
</dbReference>
<dbReference type="PRO" id="PR:P57735"/>
<dbReference type="Proteomes" id="UP000005640">
    <property type="component" value="Chromosome 1"/>
</dbReference>
<dbReference type="RNAct" id="P57735">
    <property type="molecule type" value="protein"/>
</dbReference>
<dbReference type="Bgee" id="ENSG00000132698">
    <property type="expression patterns" value="Expressed in lower esophagus mucosa and 140 other cell types or tissues"/>
</dbReference>
<dbReference type="GO" id="GO:0031410">
    <property type="term" value="C:cytoplasmic vesicle"/>
    <property type="evidence" value="ECO:0000314"/>
    <property type="project" value="UniProtKB"/>
</dbReference>
<dbReference type="GO" id="GO:0070062">
    <property type="term" value="C:extracellular exosome"/>
    <property type="evidence" value="ECO:0007005"/>
    <property type="project" value="UniProtKB"/>
</dbReference>
<dbReference type="GO" id="GO:0005794">
    <property type="term" value="C:Golgi apparatus"/>
    <property type="evidence" value="ECO:0000318"/>
    <property type="project" value="GO_Central"/>
</dbReference>
<dbReference type="GO" id="GO:0005886">
    <property type="term" value="C:plasma membrane"/>
    <property type="evidence" value="ECO:0000314"/>
    <property type="project" value="HPA"/>
</dbReference>
<dbReference type="GO" id="GO:0031143">
    <property type="term" value="C:pseudopodium"/>
    <property type="evidence" value="ECO:0000314"/>
    <property type="project" value="UniProtKB"/>
</dbReference>
<dbReference type="GO" id="GO:0031260">
    <property type="term" value="C:pseudopodium membrane"/>
    <property type="evidence" value="ECO:0007669"/>
    <property type="project" value="UniProtKB-SubCell"/>
</dbReference>
<dbReference type="GO" id="GO:0055037">
    <property type="term" value="C:recycling endosome"/>
    <property type="evidence" value="ECO:0000318"/>
    <property type="project" value="GO_Central"/>
</dbReference>
<dbReference type="GO" id="GO:0003925">
    <property type="term" value="F:G protein activity"/>
    <property type="evidence" value="ECO:0000250"/>
    <property type="project" value="UniProtKB"/>
</dbReference>
<dbReference type="GO" id="GO:0005525">
    <property type="term" value="F:GTP binding"/>
    <property type="evidence" value="ECO:0000318"/>
    <property type="project" value="GO_Central"/>
</dbReference>
<dbReference type="GO" id="GO:0003924">
    <property type="term" value="F:GTPase activity"/>
    <property type="evidence" value="ECO:0000318"/>
    <property type="project" value="GO_Central"/>
</dbReference>
<dbReference type="GO" id="GO:0031489">
    <property type="term" value="F:myosin V binding"/>
    <property type="evidence" value="ECO:0000353"/>
    <property type="project" value="UniProtKB"/>
</dbReference>
<dbReference type="GO" id="GO:0003382">
    <property type="term" value="P:epithelial cell morphogenesis"/>
    <property type="evidence" value="ECO:0000250"/>
    <property type="project" value="UniProtKB"/>
</dbReference>
<dbReference type="GO" id="GO:0006887">
    <property type="term" value="P:exocytosis"/>
    <property type="evidence" value="ECO:0000318"/>
    <property type="project" value="GO_Central"/>
</dbReference>
<dbReference type="GO" id="GO:0008284">
    <property type="term" value="P:positive regulation of cell population proliferation"/>
    <property type="evidence" value="ECO:0000314"/>
    <property type="project" value="UniProtKB"/>
</dbReference>
<dbReference type="GO" id="GO:0010634">
    <property type="term" value="P:positive regulation of epithelial cell migration"/>
    <property type="evidence" value="ECO:0000315"/>
    <property type="project" value="UniProtKB"/>
</dbReference>
<dbReference type="GO" id="GO:0015031">
    <property type="term" value="P:protein transport"/>
    <property type="evidence" value="ECO:0007669"/>
    <property type="project" value="UniProtKB-KW"/>
</dbReference>
<dbReference type="GO" id="GO:0031268">
    <property type="term" value="P:pseudopodium organization"/>
    <property type="evidence" value="ECO:0000314"/>
    <property type="project" value="UniProtKB"/>
</dbReference>
<dbReference type="GO" id="GO:0060627">
    <property type="term" value="P:regulation of vesicle-mediated transport"/>
    <property type="evidence" value="ECO:0000315"/>
    <property type="project" value="UniProtKB"/>
</dbReference>
<dbReference type="CDD" id="cd01868">
    <property type="entry name" value="Rab11_like"/>
    <property type="match status" value="1"/>
</dbReference>
<dbReference type="FunFam" id="3.40.50.300:FF:000067">
    <property type="entry name" value="ras-related protein RABA1f"/>
    <property type="match status" value="1"/>
</dbReference>
<dbReference type="Gene3D" id="3.40.50.300">
    <property type="entry name" value="P-loop containing nucleotide triphosphate hydrolases"/>
    <property type="match status" value="1"/>
</dbReference>
<dbReference type="InterPro" id="IPR027417">
    <property type="entry name" value="P-loop_NTPase"/>
</dbReference>
<dbReference type="InterPro" id="IPR050209">
    <property type="entry name" value="Rab_GTPases_membrane_traffic"/>
</dbReference>
<dbReference type="InterPro" id="IPR005225">
    <property type="entry name" value="Small_GTP-bd"/>
</dbReference>
<dbReference type="InterPro" id="IPR001806">
    <property type="entry name" value="Small_GTPase"/>
</dbReference>
<dbReference type="NCBIfam" id="TIGR00231">
    <property type="entry name" value="small_GTP"/>
    <property type="match status" value="1"/>
</dbReference>
<dbReference type="PANTHER" id="PTHR47979">
    <property type="entry name" value="DRAB11-RELATED"/>
    <property type="match status" value="1"/>
</dbReference>
<dbReference type="Pfam" id="PF00071">
    <property type="entry name" value="Ras"/>
    <property type="match status" value="1"/>
</dbReference>
<dbReference type="PRINTS" id="PR00449">
    <property type="entry name" value="RASTRNSFRMNG"/>
</dbReference>
<dbReference type="SMART" id="SM00175">
    <property type="entry name" value="RAB"/>
    <property type="match status" value="1"/>
</dbReference>
<dbReference type="SMART" id="SM00176">
    <property type="entry name" value="RAN"/>
    <property type="match status" value="1"/>
</dbReference>
<dbReference type="SMART" id="SM00173">
    <property type="entry name" value="RAS"/>
    <property type="match status" value="1"/>
</dbReference>
<dbReference type="SMART" id="SM00174">
    <property type="entry name" value="RHO"/>
    <property type="match status" value="1"/>
</dbReference>
<dbReference type="SUPFAM" id="SSF52540">
    <property type="entry name" value="P-loop containing nucleoside triphosphate hydrolases"/>
    <property type="match status" value="1"/>
</dbReference>
<dbReference type="PROSITE" id="PS51419">
    <property type="entry name" value="RAB"/>
    <property type="match status" value="1"/>
</dbReference>